<proteinExistence type="inferred from homology"/>
<protein>
    <recommendedName>
        <fullName evidence="1">NADH-quinone oxidoreductase subunit H</fullName>
        <ecNumber evidence="1">7.1.1.-</ecNumber>
    </recommendedName>
    <alternativeName>
        <fullName evidence="1">NADH dehydrogenase I subunit H</fullName>
    </alternativeName>
    <alternativeName>
        <fullName evidence="1">NDH-1 subunit H</fullName>
    </alternativeName>
</protein>
<evidence type="ECO:0000255" key="1">
    <source>
        <dbReference type="HAMAP-Rule" id="MF_01350"/>
    </source>
</evidence>
<accession>Q28T60</accession>
<comment type="function">
    <text evidence="1">NDH-1 shuttles electrons from NADH, via FMN and iron-sulfur (Fe-S) centers, to quinones in the respiratory chain. The immediate electron acceptor for the enzyme in this species is believed to be ubiquinone. Couples the redox reaction to proton translocation (for every two electrons transferred, four hydrogen ions are translocated across the cytoplasmic membrane), and thus conserves the redox energy in a proton gradient. This subunit may bind ubiquinone.</text>
</comment>
<comment type="catalytic activity">
    <reaction evidence="1">
        <text>a quinone + NADH + 5 H(+)(in) = a quinol + NAD(+) + 4 H(+)(out)</text>
        <dbReference type="Rhea" id="RHEA:57888"/>
        <dbReference type="ChEBI" id="CHEBI:15378"/>
        <dbReference type="ChEBI" id="CHEBI:24646"/>
        <dbReference type="ChEBI" id="CHEBI:57540"/>
        <dbReference type="ChEBI" id="CHEBI:57945"/>
        <dbReference type="ChEBI" id="CHEBI:132124"/>
    </reaction>
</comment>
<comment type="subunit">
    <text evidence="1">NDH-1 is composed of 14 different subunits. Subunits NuoA, H, J, K, L, M, N constitute the membrane sector of the complex.</text>
</comment>
<comment type="subcellular location">
    <subcellularLocation>
        <location evidence="1">Cell inner membrane</location>
        <topology evidence="1">Multi-pass membrane protein</topology>
    </subcellularLocation>
</comment>
<comment type="similarity">
    <text evidence="1">Belongs to the complex I subunit 1 family.</text>
</comment>
<keyword id="KW-0997">Cell inner membrane</keyword>
<keyword id="KW-1003">Cell membrane</keyword>
<keyword id="KW-0472">Membrane</keyword>
<keyword id="KW-0520">NAD</keyword>
<keyword id="KW-0874">Quinone</keyword>
<keyword id="KW-1185">Reference proteome</keyword>
<keyword id="KW-1278">Translocase</keyword>
<keyword id="KW-0812">Transmembrane</keyword>
<keyword id="KW-1133">Transmembrane helix</keyword>
<keyword id="KW-0830">Ubiquinone</keyword>
<feature type="chain" id="PRO_0000244920" description="NADH-quinone oxidoreductase subunit H">
    <location>
        <begin position="1"/>
        <end position="346"/>
    </location>
</feature>
<feature type="transmembrane region" description="Helical" evidence="1">
    <location>
        <begin position="13"/>
        <end position="33"/>
    </location>
</feature>
<feature type="transmembrane region" description="Helical" evidence="1">
    <location>
        <begin position="51"/>
        <end position="71"/>
    </location>
</feature>
<feature type="transmembrane region" description="Helical" evidence="1">
    <location>
        <begin position="83"/>
        <end position="103"/>
    </location>
</feature>
<feature type="transmembrane region" description="Helical" evidence="1">
    <location>
        <begin position="116"/>
        <end position="136"/>
    </location>
</feature>
<feature type="transmembrane region" description="Helical" evidence="1">
    <location>
        <begin position="162"/>
        <end position="182"/>
    </location>
</feature>
<feature type="transmembrane region" description="Helical" evidence="1">
    <location>
        <begin position="191"/>
        <end position="211"/>
    </location>
</feature>
<feature type="transmembrane region" description="Helical" evidence="1">
    <location>
        <begin position="244"/>
        <end position="264"/>
    </location>
</feature>
<feature type="transmembrane region" description="Helical" evidence="1">
    <location>
        <begin position="278"/>
        <end position="298"/>
    </location>
</feature>
<feature type="transmembrane region" description="Helical" evidence="1">
    <location>
        <begin position="310"/>
        <end position="330"/>
    </location>
</feature>
<organism>
    <name type="scientific">Jannaschia sp. (strain CCS1)</name>
    <dbReference type="NCBI Taxonomy" id="290400"/>
    <lineage>
        <taxon>Bacteria</taxon>
        <taxon>Pseudomonadati</taxon>
        <taxon>Pseudomonadota</taxon>
        <taxon>Alphaproteobacteria</taxon>
        <taxon>Rhodobacterales</taxon>
        <taxon>Roseobacteraceae</taxon>
        <taxon>Jannaschia</taxon>
    </lineage>
</organism>
<sequence>MVEFFTQTTTGAILLILLQCLLLVVPLLVALAFLMYADRKIWAAVMMRKGPNVVGAFGLLQSFADFLKYIVKEIVVPAGADRAVYFLAPIVSLVMALIAWAVIPFNDGWVLSSLNVAVLYVFAVSSLEVYGVIMGGWASNSKYPFLGSLRSAAQMISYEVSIGLIIIGVIISTGSMNFTAIVHAQDGDLGLLNWYFLPHFPMLFLFFISALAETNRPPFDLPEAEAELVAGYQVEYSSTPFLLFMIGELVAVVLMCALTVLLFFGGWLSPIPGLPDGVFWMILKMLAVFFMFSMVKAIVPRYRYDQLMRLGWKVFLPFSLFWVVFVAFMARYEVLGGFWARFAVGG</sequence>
<name>NUOH_JANSC</name>
<reference key="1">
    <citation type="submission" date="2006-02" db="EMBL/GenBank/DDBJ databases">
        <title>Complete sequence of chromosome of Jannaschia sp. CCS1.</title>
        <authorList>
            <consortium name="US DOE Joint Genome Institute"/>
            <person name="Copeland A."/>
            <person name="Lucas S."/>
            <person name="Lapidus A."/>
            <person name="Barry K."/>
            <person name="Detter J.C."/>
            <person name="Glavina del Rio T."/>
            <person name="Hammon N."/>
            <person name="Israni S."/>
            <person name="Pitluck S."/>
            <person name="Brettin T."/>
            <person name="Bruce D."/>
            <person name="Han C."/>
            <person name="Tapia R."/>
            <person name="Gilna P."/>
            <person name="Chertkov O."/>
            <person name="Saunders E."/>
            <person name="Schmutz J."/>
            <person name="Larimer F."/>
            <person name="Land M."/>
            <person name="Kyrpides N."/>
            <person name="Lykidis A."/>
            <person name="Moran M.A."/>
            <person name="Belas R."/>
            <person name="Ye W."/>
            <person name="Buchan A."/>
            <person name="Gonzalez J.M."/>
            <person name="Schell M.A."/>
            <person name="Richardson P."/>
        </authorList>
    </citation>
    <scope>NUCLEOTIDE SEQUENCE [LARGE SCALE GENOMIC DNA]</scope>
    <source>
        <strain>CCS1</strain>
    </source>
</reference>
<gene>
    <name evidence="1" type="primary">nuoH</name>
    <name type="ordered locus">Jann_1185</name>
</gene>
<dbReference type="EC" id="7.1.1.-" evidence="1"/>
<dbReference type="EMBL" id="CP000264">
    <property type="protein sequence ID" value="ABD54102.1"/>
    <property type="molecule type" value="Genomic_DNA"/>
</dbReference>
<dbReference type="RefSeq" id="WP_011454309.1">
    <property type="nucleotide sequence ID" value="NC_007802.1"/>
</dbReference>
<dbReference type="SMR" id="Q28T60"/>
<dbReference type="STRING" id="290400.Jann_1185"/>
<dbReference type="KEGG" id="jan:Jann_1185"/>
<dbReference type="eggNOG" id="COG1005">
    <property type="taxonomic scope" value="Bacteria"/>
</dbReference>
<dbReference type="HOGENOM" id="CLU_015134_0_1_5"/>
<dbReference type="OrthoDB" id="9803734at2"/>
<dbReference type="Proteomes" id="UP000008326">
    <property type="component" value="Chromosome"/>
</dbReference>
<dbReference type="GO" id="GO:0005886">
    <property type="term" value="C:plasma membrane"/>
    <property type="evidence" value="ECO:0007669"/>
    <property type="project" value="UniProtKB-SubCell"/>
</dbReference>
<dbReference type="GO" id="GO:0003954">
    <property type="term" value="F:NADH dehydrogenase activity"/>
    <property type="evidence" value="ECO:0007669"/>
    <property type="project" value="TreeGrafter"/>
</dbReference>
<dbReference type="GO" id="GO:0016655">
    <property type="term" value="F:oxidoreductase activity, acting on NAD(P)H, quinone or similar compound as acceptor"/>
    <property type="evidence" value="ECO:0007669"/>
    <property type="project" value="UniProtKB-UniRule"/>
</dbReference>
<dbReference type="GO" id="GO:0048038">
    <property type="term" value="F:quinone binding"/>
    <property type="evidence" value="ECO:0007669"/>
    <property type="project" value="UniProtKB-KW"/>
</dbReference>
<dbReference type="GO" id="GO:0009060">
    <property type="term" value="P:aerobic respiration"/>
    <property type="evidence" value="ECO:0007669"/>
    <property type="project" value="TreeGrafter"/>
</dbReference>
<dbReference type="HAMAP" id="MF_01350">
    <property type="entry name" value="NDH1_NuoH"/>
    <property type="match status" value="1"/>
</dbReference>
<dbReference type="InterPro" id="IPR001694">
    <property type="entry name" value="NADH_UbQ_OxRdtase_su1/FPO"/>
</dbReference>
<dbReference type="InterPro" id="IPR018086">
    <property type="entry name" value="NADH_UbQ_OxRdtase_su1_CS"/>
</dbReference>
<dbReference type="NCBIfam" id="NF004745">
    <property type="entry name" value="PRK06076.1-6"/>
    <property type="match status" value="1"/>
</dbReference>
<dbReference type="PANTHER" id="PTHR11432">
    <property type="entry name" value="NADH DEHYDROGENASE SUBUNIT 1"/>
    <property type="match status" value="1"/>
</dbReference>
<dbReference type="PANTHER" id="PTHR11432:SF3">
    <property type="entry name" value="NADH-UBIQUINONE OXIDOREDUCTASE CHAIN 1"/>
    <property type="match status" value="1"/>
</dbReference>
<dbReference type="Pfam" id="PF00146">
    <property type="entry name" value="NADHdh"/>
    <property type="match status" value="1"/>
</dbReference>
<dbReference type="PROSITE" id="PS00668">
    <property type="entry name" value="COMPLEX1_ND1_2"/>
    <property type="match status" value="1"/>
</dbReference>